<gene>
    <name type="primary">RALFL18</name>
    <name type="ordered locus">At2g33130</name>
    <name type="ORF">F25I18.13</name>
</gene>
<keyword id="KW-1015">Disulfide bond</keyword>
<keyword id="KW-0372">Hormone</keyword>
<keyword id="KW-1185">Reference proteome</keyword>
<keyword id="KW-0964">Secreted</keyword>
<keyword id="KW-0732">Signal</keyword>
<comment type="function">
    <text evidence="1">Cell signaling peptide that may regulate plant stress, growth, and development. Mediates a rapid alkalinization of extracellular space by mediating a transient increase in the cytoplasmic Ca(2+) concentration leading to a calcium-dependent signaling events through a cell surface receptor and a concomitant activation of some intracellular mitogen-activated protein kinases (By similarity).</text>
</comment>
<comment type="subcellular location">
    <subcellularLocation>
        <location evidence="1">Secreted</location>
    </subcellularLocation>
</comment>
<comment type="PTM">
    <text evidence="1">Proteolytically cleaved, probably by S1P, a subtilisin-like serine protease (subtilase).</text>
</comment>
<comment type="similarity">
    <text evidence="3">Belongs to the plant rapid alkalinization factor (RALF) family.</text>
</comment>
<proteinExistence type="inferred from homology"/>
<name>RLF18_ARATH</name>
<feature type="signal peptide" evidence="2">
    <location>
        <begin position="1"/>
        <end position="32"/>
    </location>
</feature>
<feature type="propeptide" id="PRO_0000420310" description="Removed in mature form" evidence="1">
    <location>
        <begin position="33"/>
        <end position="58"/>
    </location>
</feature>
<feature type="chain" id="PRO_0000420311" description="Protein RALF-like 18">
    <location>
        <begin position="59"/>
        <end position="103"/>
    </location>
</feature>
<feature type="site" description="Required for proteolytic cleavage" evidence="1">
    <location>
        <begin position="55"/>
        <end position="56"/>
    </location>
</feature>
<feature type="disulfide bond" evidence="1">
    <location>
        <begin position="92"/>
        <end position="98"/>
    </location>
</feature>
<dbReference type="EMBL" id="AC002334">
    <property type="protein sequence ID" value="AAC04909.1"/>
    <property type="molecule type" value="Genomic_DNA"/>
</dbReference>
<dbReference type="EMBL" id="CP002685">
    <property type="protein sequence ID" value="AEC08790.1"/>
    <property type="molecule type" value="Genomic_DNA"/>
</dbReference>
<dbReference type="EMBL" id="AY954812">
    <property type="protein sequence ID" value="AAX55138.1"/>
    <property type="molecule type" value="Genomic_DNA"/>
</dbReference>
<dbReference type="EMBL" id="DQ077903">
    <property type="status" value="NOT_ANNOTATED_CDS"/>
    <property type="molecule type" value="mRNA"/>
</dbReference>
<dbReference type="PIR" id="G84741">
    <property type="entry name" value="G84741"/>
</dbReference>
<dbReference type="RefSeq" id="NP_180872.1">
    <property type="nucleotide sequence ID" value="NM_128873.2"/>
</dbReference>
<dbReference type="SMR" id="O49320"/>
<dbReference type="PaxDb" id="3702-AT2G33130.1"/>
<dbReference type="EnsemblPlants" id="AT2G33130.1">
    <property type="protein sequence ID" value="AT2G33130.1"/>
    <property type="gene ID" value="AT2G33130"/>
</dbReference>
<dbReference type="GeneID" id="817875"/>
<dbReference type="Gramene" id="AT2G33130.1">
    <property type="protein sequence ID" value="AT2G33130.1"/>
    <property type="gene ID" value="AT2G33130"/>
</dbReference>
<dbReference type="KEGG" id="ath:AT2G33130"/>
<dbReference type="Araport" id="AT2G33130"/>
<dbReference type="TAIR" id="AT2G33130">
    <property type="gene designation" value="RALFL18"/>
</dbReference>
<dbReference type="HOGENOM" id="CLU_2295534_0_0_1"/>
<dbReference type="InParanoid" id="O49320"/>
<dbReference type="OMA" id="TGCYRFT"/>
<dbReference type="OrthoDB" id="1076777at2759"/>
<dbReference type="PhylomeDB" id="O49320"/>
<dbReference type="PRO" id="PR:O49320"/>
<dbReference type="Proteomes" id="UP000006548">
    <property type="component" value="Chromosome 2"/>
</dbReference>
<dbReference type="ExpressionAtlas" id="O49320">
    <property type="expression patterns" value="baseline and differential"/>
</dbReference>
<dbReference type="GO" id="GO:0048046">
    <property type="term" value="C:apoplast"/>
    <property type="evidence" value="ECO:0000250"/>
    <property type="project" value="TAIR"/>
</dbReference>
<dbReference type="GO" id="GO:0005179">
    <property type="term" value="F:hormone activity"/>
    <property type="evidence" value="ECO:0000250"/>
    <property type="project" value="UniProtKB"/>
</dbReference>
<dbReference type="GO" id="GO:0019722">
    <property type="term" value="P:calcium-mediated signaling"/>
    <property type="evidence" value="ECO:0000250"/>
    <property type="project" value="UniProtKB"/>
</dbReference>
<dbReference type="GO" id="GO:0007267">
    <property type="term" value="P:cell-cell signaling"/>
    <property type="evidence" value="ECO:0000250"/>
    <property type="project" value="TAIR"/>
</dbReference>
<dbReference type="GO" id="GO:0040008">
    <property type="term" value="P:regulation of growth"/>
    <property type="evidence" value="ECO:0007669"/>
    <property type="project" value="UniProtKB-ARBA"/>
</dbReference>
<dbReference type="InterPro" id="IPR008801">
    <property type="entry name" value="RALF"/>
</dbReference>
<dbReference type="PANTHER" id="PTHR33136:SF48">
    <property type="entry name" value="PROTEIN RALF-LIKE 14-RELATED"/>
    <property type="match status" value="1"/>
</dbReference>
<dbReference type="PANTHER" id="PTHR33136">
    <property type="entry name" value="RAPID ALKALINIZATION FACTOR-LIKE"/>
    <property type="match status" value="1"/>
</dbReference>
<dbReference type="Pfam" id="PF05498">
    <property type="entry name" value="RALF"/>
    <property type="match status" value="1"/>
</dbReference>
<organism>
    <name type="scientific">Arabidopsis thaliana</name>
    <name type="common">Mouse-ear cress</name>
    <dbReference type="NCBI Taxonomy" id="3702"/>
    <lineage>
        <taxon>Eukaryota</taxon>
        <taxon>Viridiplantae</taxon>
        <taxon>Streptophyta</taxon>
        <taxon>Embryophyta</taxon>
        <taxon>Tracheophyta</taxon>
        <taxon>Spermatophyta</taxon>
        <taxon>Magnoliopsida</taxon>
        <taxon>eudicotyledons</taxon>
        <taxon>Gunneridae</taxon>
        <taxon>Pentapetalae</taxon>
        <taxon>rosids</taxon>
        <taxon>malvids</taxon>
        <taxon>Brassicales</taxon>
        <taxon>Brassicaceae</taxon>
        <taxon>Camelineae</taxon>
        <taxon>Arabidopsis</taxon>
    </lineage>
</organism>
<reference key="1">
    <citation type="journal article" date="1999" name="Nature">
        <title>Sequence and analysis of chromosome 2 of the plant Arabidopsis thaliana.</title>
        <authorList>
            <person name="Lin X."/>
            <person name="Kaul S."/>
            <person name="Rounsley S.D."/>
            <person name="Shea T.P."/>
            <person name="Benito M.-I."/>
            <person name="Town C.D."/>
            <person name="Fujii C.Y."/>
            <person name="Mason T.M."/>
            <person name="Bowman C.L."/>
            <person name="Barnstead M.E."/>
            <person name="Feldblyum T.V."/>
            <person name="Buell C.R."/>
            <person name="Ketchum K.A."/>
            <person name="Lee J.J."/>
            <person name="Ronning C.M."/>
            <person name="Koo H.L."/>
            <person name="Moffat K.S."/>
            <person name="Cronin L.A."/>
            <person name="Shen M."/>
            <person name="Pai G."/>
            <person name="Van Aken S."/>
            <person name="Umayam L."/>
            <person name="Tallon L.J."/>
            <person name="Gill J.E."/>
            <person name="Adams M.D."/>
            <person name="Carrera A.J."/>
            <person name="Creasy T.H."/>
            <person name="Goodman H.M."/>
            <person name="Somerville C.R."/>
            <person name="Copenhaver G.P."/>
            <person name="Preuss D."/>
            <person name="Nierman W.C."/>
            <person name="White O."/>
            <person name="Eisen J.A."/>
            <person name="Salzberg S.L."/>
            <person name="Fraser C.M."/>
            <person name="Venter J.C."/>
        </authorList>
    </citation>
    <scope>NUCLEOTIDE SEQUENCE [LARGE SCALE GENOMIC DNA]</scope>
    <source>
        <strain>cv. Columbia</strain>
    </source>
</reference>
<reference key="2">
    <citation type="journal article" date="2017" name="Plant J.">
        <title>Araport11: a complete reannotation of the Arabidopsis thaliana reference genome.</title>
        <authorList>
            <person name="Cheng C.Y."/>
            <person name="Krishnakumar V."/>
            <person name="Chan A.P."/>
            <person name="Thibaud-Nissen F."/>
            <person name="Schobel S."/>
            <person name="Town C.D."/>
        </authorList>
    </citation>
    <scope>GENOME REANNOTATION</scope>
    <source>
        <strain>cv. Columbia</strain>
    </source>
</reference>
<reference key="3">
    <citation type="submission" date="2005-03" db="EMBL/GenBank/DDBJ databases">
        <authorList>
            <person name="Underwood B.A."/>
            <person name="Xiao Y.-L."/>
            <person name="Moskal W.A. Jr."/>
            <person name="Monaghan E.L."/>
            <person name="Wang W."/>
            <person name="Redman J.C."/>
            <person name="Wu H.C."/>
            <person name="Utterback T."/>
            <person name="Town C.D."/>
        </authorList>
    </citation>
    <scope>NUCLEOTIDE SEQUENCE [LARGE SCALE GENOMIC DNA]</scope>
    <scope>NUCLEOTIDE SEQUENCE [LARGE SCALE MRNA] OF 1-80</scope>
    <source>
        <strain>cv. Columbia</strain>
    </source>
</reference>
<reference key="4">
    <citation type="journal article" date="2002" name="In Silico Biol.">
        <title>Peptomics, identification of novel cationic Arabidopsis peptides with conserved sequence motifs.</title>
        <authorList>
            <person name="Olsen A.N."/>
            <person name="Mundy J."/>
            <person name="Skriver K."/>
        </authorList>
    </citation>
    <scope>GENE FAMILY</scope>
    <scope>NOMENCLATURE</scope>
</reference>
<evidence type="ECO:0000250" key="1"/>
<evidence type="ECO:0000255" key="2"/>
<evidence type="ECO:0000305" key="3"/>
<protein>
    <recommendedName>
        <fullName>Protein RALF-like 18</fullName>
    </recommendedName>
</protein>
<sequence>MMNNMKLLIIAVMIISAALLPALVVGSRPVKCDNCMDGGEKEEIMKMSSGVDVSHRILQAKRFIDYEALKKNLPAKPDGKPDKPDNKYRRGCSAATGCYRFTN</sequence>
<accession>O49320</accession>